<organism>
    <name type="scientific">Streptococcus pyogenes serotype M6 (strain ATCC BAA-946 / MGAS10394)</name>
    <dbReference type="NCBI Taxonomy" id="286636"/>
    <lineage>
        <taxon>Bacteria</taxon>
        <taxon>Bacillati</taxon>
        <taxon>Bacillota</taxon>
        <taxon>Bacilli</taxon>
        <taxon>Lactobacillales</taxon>
        <taxon>Streptococcaceae</taxon>
        <taxon>Streptococcus</taxon>
    </lineage>
</organism>
<protein>
    <recommendedName>
        <fullName evidence="1">DNA polymerase III PolC-type</fullName>
        <shortName evidence="1">PolIII</shortName>
        <ecNumber evidence="1">2.7.7.7</ecNumber>
    </recommendedName>
</protein>
<keyword id="KW-0963">Cytoplasm</keyword>
<keyword id="KW-0235">DNA replication</keyword>
<keyword id="KW-0239">DNA-directed DNA polymerase</keyword>
<keyword id="KW-0269">Exonuclease</keyword>
<keyword id="KW-0378">Hydrolase</keyword>
<keyword id="KW-0540">Nuclease</keyword>
<keyword id="KW-0548">Nucleotidyltransferase</keyword>
<keyword id="KW-0808">Transferase</keyword>
<comment type="function">
    <text evidence="1">Required for replicative DNA synthesis. This DNA polymerase also exhibits 3' to 5' exonuclease activity.</text>
</comment>
<comment type="catalytic activity">
    <reaction evidence="1">
        <text>DNA(n) + a 2'-deoxyribonucleoside 5'-triphosphate = DNA(n+1) + diphosphate</text>
        <dbReference type="Rhea" id="RHEA:22508"/>
        <dbReference type="Rhea" id="RHEA-COMP:17339"/>
        <dbReference type="Rhea" id="RHEA-COMP:17340"/>
        <dbReference type="ChEBI" id="CHEBI:33019"/>
        <dbReference type="ChEBI" id="CHEBI:61560"/>
        <dbReference type="ChEBI" id="CHEBI:173112"/>
        <dbReference type="EC" id="2.7.7.7"/>
    </reaction>
</comment>
<comment type="subcellular location">
    <subcellularLocation>
        <location evidence="1">Cytoplasm</location>
    </subcellularLocation>
</comment>
<comment type="similarity">
    <text evidence="1">Belongs to the DNA polymerase type-C family. PolC subfamily.</text>
</comment>
<accession>Q5X9U8</accession>
<dbReference type="EC" id="2.7.7.7" evidence="1"/>
<dbReference type="EMBL" id="CP000003">
    <property type="protein sequence ID" value="AAT87815.1"/>
    <property type="molecule type" value="Genomic_DNA"/>
</dbReference>
<dbReference type="RefSeq" id="WP_011184985.1">
    <property type="nucleotide sequence ID" value="NC_006086.1"/>
</dbReference>
<dbReference type="SMR" id="Q5X9U8"/>
<dbReference type="KEGG" id="spa:M6_Spy1680"/>
<dbReference type="HOGENOM" id="CLU_003297_2_0_9"/>
<dbReference type="Proteomes" id="UP000001167">
    <property type="component" value="Chromosome"/>
</dbReference>
<dbReference type="GO" id="GO:0005737">
    <property type="term" value="C:cytoplasm"/>
    <property type="evidence" value="ECO:0007669"/>
    <property type="project" value="UniProtKB-SubCell"/>
</dbReference>
<dbReference type="GO" id="GO:0008408">
    <property type="term" value="F:3'-5' exonuclease activity"/>
    <property type="evidence" value="ECO:0007669"/>
    <property type="project" value="UniProtKB-UniRule"/>
</dbReference>
<dbReference type="GO" id="GO:0003677">
    <property type="term" value="F:DNA binding"/>
    <property type="evidence" value="ECO:0007669"/>
    <property type="project" value="UniProtKB-UniRule"/>
</dbReference>
<dbReference type="GO" id="GO:0003887">
    <property type="term" value="F:DNA-directed DNA polymerase activity"/>
    <property type="evidence" value="ECO:0007669"/>
    <property type="project" value="UniProtKB-UniRule"/>
</dbReference>
<dbReference type="GO" id="GO:0006261">
    <property type="term" value="P:DNA-templated DNA replication"/>
    <property type="evidence" value="ECO:0007669"/>
    <property type="project" value="UniProtKB-UniRule"/>
</dbReference>
<dbReference type="CDD" id="cd06127">
    <property type="entry name" value="DEDDh"/>
    <property type="match status" value="1"/>
</dbReference>
<dbReference type="CDD" id="cd07435">
    <property type="entry name" value="PHP_PolIIIA_POLC"/>
    <property type="match status" value="1"/>
</dbReference>
<dbReference type="CDD" id="cd04484">
    <property type="entry name" value="polC_OBF"/>
    <property type="match status" value="1"/>
</dbReference>
<dbReference type="FunFam" id="3.30.420.10:FF:000045">
    <property type="entry name" value="3'-5' exonuclease DinG"/>
    <property type="match status" value="1"/>
</dbReference>
<dbReference type="Gene3D" id="1.10.150.870">
    <property type="match status" value="1"/>
</dbReference>
<dbReference type="Gene3D" id="3.30.1900.20">
    <property type="match status" value="1"/>
</dbReference>
<dbReference type="Gene3D" id="6.10.140.1510">
    <property type="match status" value="1"/>
</dbReference>
<dbReference type="Gene3D" id="3.20.20.140">
    <property type="entry name" value="Metal-dependent hydrolases"/>
    <property type="match status" value="1"/>
</dbReference>
<dbReference type="Gene3D" id="2.40.50.140">
    <property type="entry name" value="Nucleic acid-binding proteins"/>
    <property type="match status" value="1"/>
</dbReference>
<dbReference type="Gene3D" id="1.10.150.700">
    <property type="entry name" value="PolC, middle finger domain"/>
    <property type="match status" value="1"/>
</dbReference>
<dbReference type="Gene3D" id="3.30.420.10">
    <property type="entry name" value="Ribonuclease H-like superfamily/Ribonuclease H"/>
    <property type="match status" value="1"/>
</dbReference>
<dbReference type="HAMAP" id="MF_00356">
    <property type="entry name" value="DNApol_PolC"/>
    <property type="match status" value="1"/>
</dbReference>
<dbReference type="InterPro" id="IPR011708">
    <property type="entry name" value="DNA_pol3_alpha_NTPase_dom"/>
</dbReference>
<dbReference type="InterPro" id="IPR040982">
    <property type="entry name" value="DNA_pol3_finger"/>
</dbReference>
<dbReference type="InterPro" id="IPR024754">
    <property type="entry name" value="DNA_PolC-like_N_II"/>
</dbReference>
<dbReference type="InterPro" id="IPR028112">
    <property type="entry name" value="DNA_PolC-type_N_I"/>
</dbReference>
<dbReference type="InterPro" id="IPR004805">
    <property type="entry name" value="DnaE2/DnaE/PolC"/>
</dbReference>
<dbReference type="InterPro" id="IPR029460">
    <property type="entry name" value="DNAPol_HHH"/>
</dbReference>
<dbReference type="InterPro" id="IPR006054">
    <property type="entry name" value="DnaQ"/>
</dbReference>
<dbReference type="InterPro" id="IPR013520">
    <property type="entry name" value="Exonuclease_RNaseT/DNA_pol3"/>
</dbReference>
<dbReference type="InterPro" id="IPR012340">
    <property type="entry name" value="NA-bd_OB-fold"/>
</dbReference>
<dbReference type="InterPro" id="IPR004013">
    <property type="entry name" value="PHP_dom"/>
</dbReference>
<dbReference type="InterPro" id="IPR003141">
    <property type="entry name" value="Pol/His_phosphatase_N"/>
</dbReference>
<dbReference type="InterPro" id="IPR016195">
    <property type="entry name" value="Pol/histidinol_Pase-like"/>
</dbReference>
<dbReference type="InterPro" id="IPR006308">
    <property type="entry name" value="Pol_III_a_PolC-type_gram_pos"/>
</dbReference>
<dbReference type="InterPro" id="IPR044923">
    <property type="entry name" value="PolC_middle_finger_sf"/>
</dbReference>
<dbReference type="InterPro" id="IPR012337">
    <property type="entry name" value="RNaseH-like_sf"/>
</dbReference>
<dbReference type="InterPro" id="IPR036397">
    <property type="entry name" value="RNaseH_sf"/>
</dbReference>
<dbReference type="NCBIfam" id="TIGR00573">
    <property type="entry name" value="dnaq"/>
    <property type="match status" value="1"/>
</dbReference>
<dbReference type="NCBIfam" id="TIGR01405">
    <property type="entry name" value="polC_Gram_pos"/>
    <property type="match status" value="1"/>
</dbReference>
<dbReference type="NCBIfam" id="NF001688">
    <property type="entry name" value="PRK00448.1"/>
    <property type="match status" value="1"/>
</dbReference>
<dbReference type="PANTHER" id="PTHR32294:SF5">
    <property type="entry name" value="DNA POLYMERASE III POLC-TYPE"/>
    <property type="match status" value="1"/>
</dbReference>
<dbReference type="PANTHER" id="PTHR32294">
    <property type="entry name" value="DNA POLYMERASE III SUBUNIT ALPHA"/>
    <property type="match status" value="1"/>
</dbReference>
<dbReference type="Pfam" id="PF14480">
    <property type="entry name" value="DNA_pol3_a_NI"/>
    <property type="match status" value="1"/>
</dbReference>
<dbReference type="Pfam" id="PF11490">
    <property type="entry name" value="DNA_pol3_a_NII"/>
    <property type="match status" value="1"/>
</dbReference>
<dbReference type="Pfam" id="PF07733">
    <property type="entry name" value="DNA_pol3_alpha"/>
    <property type="match status" value="2"/>
</dbReference>
<dbReference type="Pfam" id="PF17657">
    <property type="entry name" value="DNA_pol3_finger"/>
    <property type="match status" value="1"/>
</dbReference>
<dbReference type="Pfam" id="PF14579">
    <property type="entry name" value="HHH_6"/>
    <property type="match status" value="1"/>
</dbReference>
<dbReference type="Pfam" id="PF02811">
    <property type="entry name" value="PHP"/>
    <property type="match status" value="2"/>
</dbReference>
<dbReference type="Pfam" id="PF00929">
    <property type="entry name" value="RNase_T"/>
    <property type="match status" value="1"/>
</dbReference>
<dbReference type="SMART" id="SM00479">
    <property type="entry name" value="EXOIII"/>
    <property type="match status" value="1"/>
</dbReference>
<dbReference type="SMART" id="SM00481">
    <property type="entry name" value="POLIIIAc"/>
    <property type="match status" value="1"/>
</dbReference>
<dbReference type="SUPFAM" id="SSF50249">
    <property type="entry name" value="Nucleic acid-binding proteins"/>
    <property type="match status" value="1"/>
</dbReference>
<dbReference type="SUPFAM" id="SSF89550">
    <property type="entry name" value="PHP domain-like"/>
    <property type="match status" value="1"/>
</dbReference>
<dbReference type="SUPFAM" id="SSF53098">
    <property type="entry name" value="Ribonuclease H-like"/>
    <property type="match status" value="1"/>
</dbReference>
<evidence type="ECO:0000255" key="1">
    <source>
        <dbReference type="HAMAP-Rule" id="MF_00356"/>
    </source>
</evidence>
<feature type="chain" id="PRO_0000204603" description="DNA polymerase III PolC-type">
    <location>
        <begin position="1"/>
        <end position="1465"/>
    </location>
</feature>
<feature type="domain" description="Exonuclease">
    <location>
        <begin position="427"/>
        <end position="583"/>
    </location>
</feature>
<gene>
    <name evidence="1" type="primary">polC</name>
    <name type="ordered locus">M6_Spy1680</name>
</gene>
<reference key="1">
    <citation type="journal article" date="2004" name="J. Infect. Dis.">
        <title>Progress toward characterization of the group A Streptococcus metagenome: complete genome sequence of a macrolide-resistant serotype M6 strain.</title>
        <authorList>
            <person name="Banks D.J."/>
            <person name="Porcella S.F."/>
            <person name="Barbian K.D."/>
            <person name="Beres S.B."/>
            <person name="Philips L.E."/>
            <person name="Voyich J.M."/>
            <person name="DeLeo F.R."/>
            <person name="Martin J.M."/>
            <person name="Somerville G.A."/>
            <person name="Musser J.M."/>
        </authorList>
    </citation>
    <scope>NUCLEOTIDE SEQUENCE [LARGE SCALE GENOMIC DNA]</scope>
    <source>
        <strain>ATCC BAA-946 / MGAS10394</strain>
    </source>
</reference>
<sequence>MSDLFAKLMDQIEMPLDMRRSSAFSSADIIEVKVHSVSRLWEFHFAFAAVLPIATYRELHDRLIRTFEAADIKVTFDIQAAQVDYSDDLLQAYYQEAFEHAPCNSASFKSSFSKLKVTYEDDKLIIAAPGFVNNDHFRNNHLPNLVKQFEAFGFGTLTIDMVSDQEMTEHLTKNFVSSRQALVEKAVQDNLEAQKSLEAMMPPVEEATPAPKFDYKERAAKRQAGFEKATITPMIEIETEENRIVFEGMVFDVERKTTRTGRHIINFKMTDYTSSFALQKWAKDDEELRKFDMIAKGAWLRVQGNIETNPFTKSLTMNVQQVKEIVHHERKDLMPEGQKRVEFHAHTNMSTMDALPTVESLIDMAAKWGHKAVAITDHANVQSFPHGYHRARKAGIKAIFGLEANIVEDKVPISYDPVDMDLHEATYVVFDVETTGLSAMNNDLIQIAASKMFKGNIVEQFDEFIDPGHPLSAFTTELTGITDKHLQGAKPLVTVLKAFQDFCKDSILVAHNASFDVGFMNANYERHDLPKITQPVIDTLEFARNLYPEYKRHGLGPLTKRFQVSLDHHHMANYDAEATGRLLFIFLKDAREKHGIKNLLQLNTDLVAEDSYKKARIKHATIYVQNQVGLKNMFKLVSLSNIKYFEGIPRIPRTVLDAHREGLLLGTACSDGEVFDAVLTKGIDAAVDLAKYYDFIEIMPPAIYQPLVVRELIKDQAGIEQVIRDLIEVGKRANKPVLATGNVHYLEPEEEIYREIIVRSLGQGAMINRTIGRGEGAQPAPLPKAHFRTTNEMLDEFAFLGKDLAYQVVVENTQDFADRIEEVEVVKGDLYTPYIDKAEETVAELTYQKAFEIYGNPLPDIIDLRIEKELTSILGNGFAVIYLASQMLVNRSNERGYLVGSRGSVGSSFVATMIGITEVNPMPPHYVCPSCQHSEFITDGSVGSGYDLPNKPCPKCGTPYQKDGQDIPFETFLGFDGDKVPDIDLNFSGDDQPSAHLDVRDIFGDEYAFRAGTVGTVAEKTAYGFVKGYERDYGKFYRDAEVERLAAGAAGVKRTTGQHPGGIVVIPNYMDVYDFTPVQYPADDVTASWQTTHFNFHDIDENVLKLDILGHDDPTMIRKLQDLSGIDPITIPADDPGVMALFSGTEVLGVTPEQIGTPTGMLGIPEFGTNFVRGMVNETHPTTFAELLQLSGLSHGTDVWLGNAQDLIKEGIATLKTVIGCRDDIMVYLMHAGLEPKMAFTIMERVRKGLWLKISEEERNGYIDAMRENNVPDWYIESCGKIKYMFPKAHAAAYVLMALRVAYFKVHHPIMYYCAYFSIRAKAFELKTMSGGLDAVKARMEDITIKRKNNEATNVENDLFTTLEIVNEMLERGFKFGKLDLYKSDAIEFQIKGDTLIPPFIALEGLGENVAKQIVKARQEGEFLSKMELRKRGGASSTLVEKMDEMSILGNMPEDNQLSLFDDFF</sequence>
<proteinExistence type="inferred from homology"/>
<name>DPO3_STRP6</name>